<reference key="1">
    <citation type="journal article" date="2003" name="Mol. Microbiol.">
        <title>Genome-based analysis of virulence genes in a non-biofilm-forming Staphylococcus epidermidis strain (ATCC 12228).</title>
        <authorList>
            <person name="Zhang Y.-Q."/>
            <person name="Ren S.-X."/>
            <person name="Li H.-L."/>
            <person name="Wang Y.-X."/>
            <person name="Fu G."/>
            <person name="Yang J."/>
            <person name="Qin Z.-Q."/>
            <person name="Miao Y.-G."/>
            <person name="Wang W.-Y."/>
            <person name="Chen R.-S."/>
            <person name="Shen Y."/>
            <person name="Chen Z."/>
            <person name="Yuan Z.-H."/>
            <person name="Zhao G.-P."/>
            <person name="Qu D."/>
            <person name="Danchin A."/>
            <person name="Wen Y.-M."/>
        </authorList>
    </citation>
    <scope>NUCLEOTIDE SEQUENCE [LARGE SCALE GENOMIC DNA]</scope>
    <source>
        <strain>ATCC 12228 / FDA PCI 1200</strain>
    </source>
</reference>
<organism>
    <name type="scientific">Staphylococcus epidermidis (strain ATCC 12228 / FDA PCI 1200)</name>
    <dbReference type="NCBI Taxonomy" id="176280"/>
    <lineage>
        <taxon>Bacteria</taxon>
        <taxon>Bacillati</taxon>
        <taxon>Bacillota</taxon>
        <taxon>Bacilli</taxon>
        <taxon>Bacillales</taxon>
        <taxon>Staphylococcaceae</taxon>
        <taxon>Staphylococcus</taxon>
    </lineage>
</organism>
<dbReference type="EC" id="2.7.11.-" evidence="1"/>
<dbReference type="EC" id="2.7.4.-" evidence="1"/>
<dbReference type="EMBL" id="AE015929">
    <property type="protein sequence ID" value="AAO04140.1"/>
    <property type="molecule type" value="Genomic_DNA"/>
</dbReference>
<dbReference type="RefSeq" id="NP_764098.1">
    <property type="nucleotide sequence ID" value="NC_004461.1"/>
</dbReference>
<dbReference type="RefSeq" id="WP_001829649.1">
    <property type="nucleotide sequence ID" value="NZ_WBME01000030.1"/>
</dbReference>
<dbReference type="SMR" id="Q8CTE7"/>
<dbReference type="GeneID" id="50019310"/>
<dbReference type="KEGG" id="sep:SE_0543"/>
<dbReference type="PATRIC" id="fig|176280.10.peg.514"/>
<dbReference type="eggNOG" id="COG1493">
    <property type="taxonomic scope" value="Bacteria"/>
</dbReference>
<dbReference type="HOGENOM" id="CLU_052030_0_1_9"/>
<dbReference type="OrthoDB" id="9778803at2"/>
<dbReference type="Proteomes" id="UP000001411">
    <property type="component" value="Chromosome"/>
</dbReference>
<dbReference type="GO" id="GO:0005524">
    <property type="term" value="F:ATP binding"/>
    <property type="evidence" value="ECO:0007669"/>
    <property type="project" value="UniProtKB-UniRule"/>
</dbReference>
<dbReference type="GO" id="GO:0000287">
    <property type="term" value="F:magnesium ion binding"/>
    <property type="evidence" value="ECO:0007669"/>
    <property type="project" value="UniProtKB-UniRule"/>
</dbReference>
<dbReference type="GO" id="GO:0000155">
    <property type="term" value="F:phosphorelay sensor kinase activity"/>
    <property type="evidence" value="ECO:0007669"/>
    <property type="project" value="InterPro"/>
</dbReference>
<dbReference type="GO" id="GO:0004674">
    <property type="term" value="F:protein serine/threonine kinase activity"/>
    <property type="evidence" value="ECO:0007669"/>
    <property type="project" value="UniProtKB-KW"/>
</dbReference>
<dbReference type="GO" id="GO:0004712">
    <property type="term" value="F:protein serine/threonine/tyrosine kinase activity"/>
    <property type="evidence" value="ECO:0007669"/>
    <property type="project" value="UniProtKB-UniRule"/>
</dbReference>
<dbReference type="GO" id="GO:0006109">
    <property type="term" value="P:regulation of carbohydrate metabolic process"/>
    <property type="evidence" value="ECO:0007669"/>
    <property type="project" value="UniProtKB-UniRule"/>
</dbReference>
<dbReference type="CDD" id="cd01918">
    <property type="entry name" value="HprK_C"/>
    <property type="match status" value="1"/>
</dbReference>
<dbReference type="FunFam" id="3.40.1390.20:FF:000002">
    <property type="entry name" value="HPr kinase/phosphorylase"/>
    <property type="match status" value="1"/>
</dbReference>
<dbReference type="FunFam" id="3.40.50.300:FF:000174">
    <property type="entry name" value="HPr kinase/phosphorylase"/>
    <property type="match status" value="1"/>
</dbReference>
<dbReference type="Gene3D" id="3.40.1390.20">
    <property type="entry name" value="HprK N-terminal domain-like"/>
    <property type="match status" value="1"/>
</dbReference>
<dbReference type="Gene3D" id="3.40.50.300">
    <property type="entry name" value="P-loop containing nucleotide triphosphate hydrolases"/>
    <property type="match status" value="1"/>
</dbReference>
<dbReference type="HAMAP" id="MF_01249">
    <property type="entry name" value="HPr_kinase"/>
    <property type="match status" value="1"/>
</dbReference>
<dbReference type="InterPro" id="IPR003755">
    <property type="entry name" value="HPr(Ser)_kin/Pase"/>
</dbReference>
<dbReference type="InterPro" id="IPR011104">
    <property type="entry name" value="Hpr_kin/Pase_C"/>
</dbReference>
<dbReference type="InterPro" id="IPR011126">
    <property type="entry name" value="Hpr_kin/Pase_Hpr_N"/>
</dbReference>
<dbReference type="InterPro" id="IPR027417">
    <property type="entry name" value="P-loop_NTPase"/>
</dbReference>
<dbReference type="InterPro" id="IPR028979">
    <property type="entry name" value="Ser_kin/Pase_Hpr-like_N_sf"/>
</dbReference>
<dbReference type="NCBIfam" id="TIGR00679">
    <property type="entry name" value="hpr-ser"/>
    <property type="match status" value="1"/>
</dbReference>
<dbReference type="PANTHER" id="PTHR30305:SF1">
    <property type="entry name" value="HPR KINASE_PHOSPHORYLASE"/>
    <property type="match status" value="1"/>
</dbReference>
<dbReference type="PANTHER" id="PTHR30305">
    <property type="entry name" value="PROTEIN YJDM-RELATED"/>
    <property type="match status" value="1"/>
</dbReference>
<dbReference type="Pfam" id="PF07475">
    <property type="entry name" value="Hpr_kinase_C"/>
    <property type="match status" value="1"/>
</dbReference>
<dbReference type="Pfam" id="PF02603">
    <property type="entry name" value="Hpr_kinase_N"/>
    <property type="match status" value="1"/>
</dbReference>
<dbReference type="SUPFAM" id="SSF75138">
    <property type="entry name" value="HprK N-terminal domain-like"/>
    <property type="match status" value="1"/>
</dbReference>
<dbReference type="SUPFAM" id="SSF53795">
    <property type="entry name" value="PEP carboxykinase-like"/>
    <property type="match status" value="1"/>
</dbReference>
<keyword id="KW-0067">ATP-binding</keyword>
<keyword id="KW-0119">Carbohydrate metabolism</keyword>
<keyword id="KW-0418">Kinase</keyword>
<keyword id="KW-0460">Magnesium</keyword>
<keyword id="KW-0479">Metal-binding</keyword>
<keyword id="KW-0511">Multifunctional enzyme</keyword>
<keyword id="KW-0547">Nucleotide-binding</keyword>
<keyword id="KW-0723">Serine/threonine-protein kinase</keyword>
<keyword id="KW-0808">Transferase</keyword>
<evidence type="ECO:0000255" key="1">
    <source>
        <dbReference type="HAMAP-Rule" id="MF_01249"/>
    </source>
</evidence>
<comment type="function">
    <text evidence="1">Catalyzes the ATP- as well as the pyrophosphate-dependent phosphorylation of a specific serine residue in HPr, a phosphocarrier protein of the phosphoenolpyruvate-dependent sugar phosphotransferase system (PTS). HprK/P also catalyzes the pyrophosphate-producing, inorganic phosphate-dependent dephosphorylation (phosphorolysis) of seryl-phosphorylated HPr (P-Ser-HPr). The two antagonistic activities of HprK/P are regulated by several intracellular metabolites, which change their concentration in response to the absence or presence of rapidly metabolisable carbon sources (glucose, fructose, etc.) in the growth medium. Therefore, by controlling the phosphorylation state of HPr, HPrK/P is a sensor enzyme that plays a major role in the regulation of carbon metabolism and sugar transport: it mediates carbon catabolite repression (CCR), and regulates PTS-catalyzed carbohydrate uptake and inducer exclusion.</text>
</comment>
<comment type="catalytic activity">
    <reaction evidence="1">
        <text>[HPr protein]-L-serine + ATP = [HPr protein]-O-phospho-L-serine + ADP + H(+)</text>
        <dbReference type="Rhea" id="RHEA:46600"/>
        <dbReference type="Rhea" id="RHEA-COMP:11602"/>
        <dbReference type="Rhea" id="RHEA-COMP:11603"/>
        <dbReference type="ChEBI" id="CHEBI:15378"/>
        <dbReference type="ChEBI" id="CHEBI:29999"/>
        <dbReference type="ChEBI" id="CHEBI:30616"/>
        <dbReference type="ChEBI" id="CHEBI:83421"/>
        <dbReference type="ChEBI" id="CHEBI:456216"/>
    </reaction>
</comment>
<comment type="catalytic activity">
    <reaction evidence="1">
        <text>[HPr protein]-O-phospho-L-serine + phosphate + H(+) = [HPr protein]-L-serine + diphosphate</text>
        <dbReference type="Rhea" id="RHEA:46604"/>
        <dbReference type="Rhea" id="RHEA-COMP:11602"/>
        <dbReference type="Rhea" id="RHEA-COMP:11603"/>
        <dbReference type="ChEBI" id="CHEBI:15378"/>
        <dbReference type="ChEBI" id="CHEBI:29999"/>
        <dbReference type="ChEBI" id="CHEBI:33019"/>
        <dbReference type="ChEBI" id="CHEBI:43474"/>
        <dbReference type="ChEBI" id="CHEBI:83421"/>
    </reaction>
</comment>
<comment type="cofactor">
    <cofactor evidence="1">
        <name>Mg(2+)</name>
        <dbReference type="ChEBI" id="CHEBI:18420"/>
    </cofactor>
</comment>
<comment type="subunit">
    <text evidence="1">Homohexamer.</text>
</comment>
<comment type="domain">
    <text evidence="1">The Walker A ATP-binding motif also binds Pi and PPi.</text>
</comment>
<comment type="miscellaneous">
    <text evidence="1">Both phosphorylation and phosphorolysis are carried out by the same active site and suggest a common mechanism for both reactions.</text>
</comment>
<comment type="similarity">
    <text evidence="1">Belongs to the HPrK/P family.</text>
</comment>
<feature type="chain" id="PRO_0000058987" description="HPr kinase/phosphorylase">
    <location>
        <begin position="1"/>
        <end position="310"/>
    </location>
</feature>
<feature type="region of interest" description="Important for the catalytic mechanism of both phosphorylation and dephosphorylation" evidence="1">
    <location>
        <begin position="199"/>
        <end position="208"/>
    </location>
</feature>
<feature type="region of interest" description="Important for the catalytic mechanism of dephosphorylation" evidence="1">
    <location>
        <begin position="262"/>
        <end position="267"/>
    </location>
</feature>
<feature type="active site" evidence="1">
    <location>
        <position position="136"/>
    </location>
</feature>
<feature type="active site" evidence="1">
    <location>
        <position position="157"/>
    </location>
</feature>
<feature type="active site" description="Proton acceptor; for phosphorylation activity. Proton donor; for dephosphorylation activity" evidence="1">
    <location>
        <position position="175"/>
    </location>
</feature>
<feature type="active site" evidence="1">
    <location>
        <position position="241"/>
    </location>
</feature>
<feature type="binding site" evidence="1">
    <location>
        <begin position="151"/>
        <end position="158"/>
    </location>
    <ligand>
        <name>ATP</name>
        <dbReference type="ChEBI" id="CHEBI:30616"/>
    </ligand>
</feature>
<feature type="binding site" evidence="1">
    <location>
        <position position="158"/>
    </location>
    <ligand>
        <name>Mg(2+)</name>
        <dbReference type="ChEBI" id="CHEBI:18420"/>
    </ligand>
</feature>
<feature type="binding site" evidence="1">
    <location>
        <position position="200"/>
    </location>
    <ligand>
        <name>Mg(2+)</name>
        <dbReference type="ChEBI" id="CHEBI:18420"/>
    </ligand>
</feature>
<gene>
    <name evidence="1" type="primary">hprK</name>
    <name type="ordered locus">SE_0543</name>
</gene>
<protein>
    <recommendedName>
        <fullName evidence="1">HPr kinase/phosphorylase</fullName>
        <shortName evidence="1">HPrK/P</shortName>
        <ecNumber evidence="1">2.7.11.-</ecNumber>
        <ecNumber evidence="1">2.7.4.-</ecNumber>
    </recommendedName>
    <alternativeName>
        <fullName evidence="1">HPr(Ser) kinase/phosphorylase</fullName>
    </alternativeName>
</protein>
<proteinExistence type="inferred from homology"/>
<name>HPRK_STAES</name>
<sequence length="310" mass="34696">MLTTDRLVNTLNLELLTGEEGLDRPIKNTDISRPGLEMAGYFSHYASDRIQLLGTTELSFYNLLPDEEKKGRMRKLCRPETPAIIVTRGLEPPEELIQASQETHTPIIVAKDATTSLMSRLTTFLEHELAKTTSLHGVLVDVYGVGVLITGDSGIGKSETALELVKRGHRLVADDNVEIKEITKDELVGKPPKLIEHLLEIRGLGIINVMTLFGAGSILTEKQIRLNINLENWNKNKLYDRVGLNEETLKILDTEITKKTIPVRPGRNVAVIIEVAAMNYRLNIMGINTAVEFNERLNEEIVRNSHKSEE</sequence>
<accession>Q8CTE7</accession>